<name>VE5_HPV39</name>
<evidence type="ECO:0000305" key="1"/>
<keyword id="KW-0244">Early protein</keyword>
<keyword id="KW-1185">Reference proteome</keyword>
<gene>
    <name type="primary">E5</name>
</gene>
<dbReference type="EMBL" id="M62849">
    <property type="protein sequence ID" value="AAA47054.1"/>
    <property type="molecule type" value="Genomic_DNA"/>
</dbReference>
<dbReference type="PIR" id="F38502">
    <property type="entry name" value="W5WL39"/>
</dbReference>
<dbReference type="SMR" id="P24833"/>
<dbReference type="Proteomes" id="UP000009120">
    <property type="component" value="Genome"/>
</dbReference>
<dbReference type="InterPro" id="IPR004270">
    <property type="entry name" value="Papilloma_E5_alpha"/>
</dbReference>
<dbReference type="Pfam" id="PF03025">
    <property type="entry name" value="Papilloma_E5"/>
    <property type="match status" value="1"/>
</dbReference>
<comment type="similarity">
    <text evidence="1">Belongs to the papillomaviridae E5 protein family.</text>
</comment>
<accession>P24833</accession>
<organism>
    <name type="scientific">Human papillomavirus 39</name>
    <dbReference type="NCBI Taxonomy" id="10588"/>
    <lineage>
        <taxon>Viruses</taxon>
        <taxon>Monodnaviria</taxon>
        <taxon>Shotokuvirae</taxon>
        <taxon>Cossaviricota</taxon>
        <taxon>Papovaviricetes</taxon>
        <taxon>Zurhausenvirales</taxon>
        <taxon>Papillomaviridae</taxon>
        <taxon>Firstpapillomavirinae</taxon>
        <taxon>Alphapapillomavirus</taxon>
        <taxon>Alphapapillomavirus 7</taxon>
    </lineage>
</organism>
<protein>
    <recommendedName>
        <fullName>Probable protein E5</fullName>
    </recommendedName>
</protein>
<reference key="1">
    <citation type="journal article" date="1991" name="Virology">
        <title>Genome organization and nucleotide sequence of human papillomavirus type 39.</title>
        <authorList>
            <person name="Volpers C."/>
            <person name="Streeck R.E."/>
        </authorList>
    </citation>
    <scope>NUCLEOTIDE SEQUENCE [GENOMIC DNA]</scope>
</reference>
<proteinExistence type="inferred from homology"/>
<organismHost>
    <name type="scientific">Homo sapiens</name>
    <name type="common">Human</name>
    <dbReference type="NCBI Taxonomy" id="9606"/>
</organismHost>
<sequence length="72" mass="8569">MILLVFLVWFGVCIYICCNVPLLPSVHVCAYVWIIVFVFILIRTTPLEVFFVYLLFFVLPMWLLHRLAMDMI</sequence>
<feature type="chain" id="PRO_0000133294" description="Probable protein E5">
    <location>
        <begin position="1"/>
        <end position="72"/>
    </location>
</feature>